<proteinExistence type="predicted"/>
<organism>
    <name type="scientific">Equine herpesvirus 2 (strain 86/87)</name>
    <name type="common">EHV-2</name>
    <dbReference type="NCBI Taxonomy" id="82831"/>
    <lineage>
        <taxon>Viruses</taxon>
        <taxon>Duplodnaviria</taxon>
        <taxon>Heunggongvirae</taxon>
        <taxon>Peploviricota</taxon>
        <taxon>Herviviricetes</taxon>
        <taxon>Herpesvirales</taxon>
        <taxon>Orthoherpesviridae</taxon>
        <taxon>Gammaherpesvirinae</taxon>
        <taxon>Percavirus</taxon>
        <taxon>Percavirus equidgamma2</taxon>
        <taxon>Equid gammaherpesvirus 2</taxon>
    </lineage>
</organism>
<protein>
    <recommendedName>
        <fullName>Uncharacterized gene 10 protein</fullName>
    </recommendedName>
</protein>
<feature type="chain" id="PRO_0000406021" description="Uncharacterized gene 10 protein">
    <location>
        <begin position="1"/>
        <end position="405"/>
    </location>
</feature>
<sequence length="405" mass="45307">MEEVISASLADIMLAMNGEKFFVENWKVEVTPAALTVVNTSEVPVQDPRCTIITLPFSVWSAMECMLCRFQPANQLHVACKLFDTTFILQNQDLDQSRYVVVETVVSDLKKPISFSLVSEGRALAEGELRLVLTPLRALDYVHVFSVIYNMHNELPPGLELASVTEYCGSLVKELCGTAIRTRANTYTMAFKWEGARQFYRVTNSYFCEQYNRFKIVRLCVKECKMYRKEGNVHVLDITVVGDTQPEMVHGVVSVMGAEVDSMLVTDRYISPLYNQAWGWALPLYAPTQVVVPPKKTLKVPVDGMFFRGTVPGAQPVCLIGGSNINPDLVVRPVVWKPMTSLVLTLYNNSERPLAIRRGDLAALAVPVNSTDIRTVYSDNSGTLITWDTGTCEPVEQEEEEEARA</sequence>
<gene>
    <name type="primary">10</name>
</gene>
<dbReference type="EMBL" id="U20824">
    <property type="protein sequence ID" value="AAC13799.1"/>
    <property type="molecule type" value="Genomic_DNA"/>
</dbReference>
<dbReference type="PIR" id="S55606">
    <property type="entry name" value="S55606"/>
</dbReference>
<dbReference type="SMR" id="Q66616"/>
<dbReference type="KEGG" id="vg:1461086"/>
<dbReference type="Proteomes" id="UP000007083">
    <property type="component" value="Segment"/>
</dbReference>
<dbReference type="InterPro" id="IPR036157">
    <property type="entry name" value="dUTPase-like_sf"/>
</dbReference>
<dbReference type="InterPro" id="IPR006882">
    <property type="entry name" value="Herpes_Orf11"/>
</dbReference>
<dbReference type="Pfam" id="PF04797">
    <property type="entry name" value="Herpes_ORF11"/>
    <property type="match status" value="1"/>
</dbReference>
<dbReference type="SUPFAM" id="SSF51283">
    <property type="entry name" value="dUTPase-like"/>
    <property type="match status" value="1"/>
</dbReference>
<name>VG10_EHV2</name>
<keyword id="KW-1185">Reference proteome</keyword>
<reference key="1">
    <citation type="journal article" date="1995" name="J. Mol. Biol.">
        <title>The DNA sequence of equine herpesvirus 2.</title>
        <authorList>
            <person name="Telford E.A.R."/>
            <person name="Watson M.S."/>
            <person name="Aird H.C."/>
            <person name="Perry J."/>
            <person name="Davison A.J."/>
        </authorList>
    </citation>
    <scope>NUCLEOTIDE SEQUENCE [LARGE SCALE GENOMIC DNA]</scope>
</reference>
<organismHost>
    <name type="scientific">Equus caballus</name>
    <name type="common">Horse</name>
    <dbReference type="NCBI Taxonomy" id="9796"/>
</organismHost>
<accession>Q66616</accession>